<feature type="transit peptide" description="Chloroplast" evidence="7">
    <location>
        <begin position="1"/>
        <end status="unknown"/>
    </location>
</feature>
<feature type="chain" id="PRO_0000310860" description="Chlorophyll a-b binding protein P4, chloroplastic">
    <location>
        <begin status="unknown"/>
        <end position="252"/>
    </location>
</feature>
<feature type="transmembrane region" description="Helical" evidence="4">
    <location>
        <begin position="101"/>
        <end position="121"/>
    </location>
</feature>
<feature type="transmembrane region" description="Helical" evidence="4">
    <location>
        <begin position="134"/>
        <end position="154"/>
    </location>
</feature>
<feature type="binding site" description="axial binding residue" evidence="1">
    <location>
        <position position="56"/>
    </location>
    <ligand>
        <name>chlorophyll b</name>
        <dbReference type="ChEBI" id="CHEBI:61721"/>
        <label>1</label>
    </ligand>
    <ligandPart>
        <name>Mg</name>
        <dbReference type="ChEBI" id="CHEBI:25107"/>
    </ligandPart>
</feature>
<feature type="binding site" evidence="3">
    <location>
        <position position="76"/>
    </location>
    <ligand>
        <name>chlorophyll a</name>
        <dbReference type="ChEBI" id="CHEBI:58416"/>
        <label>1</label>
    </ligand>
</feature>
<feature type="binding site" description="axial binding residue" evidence="2">
    <location>
        <position position="95"/>
    </location>
    <ligand>
        <name>chlorophyll a</name>
        <dbReference type="ChEBI" id="CHEBI:58416"/>
        <label>1</label>
    </ligand>
    <ligandPart>
        <name>Mg</name>
        <dbReference type="ChEBI" id="CHEBI:25107"/>
    </ligandPart>
</feature>
<feature type="binding site" evidence="2">
    <location>
        <position position="100"/>
    </location>
    <ligand>
        <name>chlorophyll b</name>
        <dbReference type="ChEBI" id="CHEBI:61721"/>
        <label>2</label>
    </ligand>
</feature>
<feature type="binding site" evidence="3">
    <location>
        <position position="137"/>
    </location>
    <ligand>
        <name>chlorophyll b</name>
        <dbReference type="ChEBI" id="CHEBI:61721"/>
        <label>3</label>
    </ligand>
</feature>
<feature type="binding site" description="axial binding residue" evidence="1">
    <location>
        <position position="143"/>
    </location>
    <ligand>
        <name>chlorophyll b</name>
        <dbReference type="ChEBI" id="CHEBI:61721"/>
        <label>2</label>
    </ligand>
    <ligandPart>
        <name>Mg</name>
        <dbReference type="ChEBI" id="CHEBI:25107"/>
    </ligandPart>
</feature>
<feature type="binding site" description="axial binding residue" evidence="3">
    <location>
        <position position="153"/>
    </location>
    <ligand>
        <name>chlorophyll b</name>
        <dbReference type="ChEBI" id="CHEBI:61721"/>
        <label>3</label>
    </ligand>
    <ligandPart>
        <name>Mg</name>
        <dbReference type="ChEBI" id="CHEBI:25107"/>
    </ligandPart>
</feature>
<feature type="binding site" evidence="3">
    <location>
        <position position="156"/>
    </location>
    <ligand>
        <name>chlorophyll b</name>
        <dbReference type="ChEBI" id="CHEBI:61721"/>
        <label>4</label>
    </ligand>
</feature>
<feature type="binding site" evidence="2">
    <location>
        <position position="203"/>
    </location>
    <ligand>
        <name>chlorophyll a</name>
        <dbReference type="ChEBI" id="CHEBI:58416"/>
        <label>5</label>
    </ligand>
</feature>
<feature type="binding site" description="axial binding residue" evidence="2">
    <location>
        <position position="204"/>
    </location>
    <ligand>
        <name>chlorophyll a</name>
        <dbReference type="ChEBI" id="CHEBI:58416"/>
        <label>3</label>
    </ligand>
    <ligandPart>
        <name>Mg</name>
        <dbReference type="ChEBI" id="CHEBI:25107"/>
    </ligandPart>
</feature>
<feature type="binding site" description="axial binding residue" evidence="2">
    <location>
        <position position="207"/>
    </location>
    <ligand>
        <name>chlorophyll a</name>
        <dbReference type="ChEBI" id="CHEBI:58416"/>
        <label>4</label>
    </ligand>
    <ligandPart>
        <name>Mg</name>
        <dbReference type="ChEBI" id="CHEBI:25107"/>
    </ligandPart>
</feature>
<feature type="binding site" evidence="2">
    <location>
        <position position="209"/>
    </location>
    <ligand>
        <name>chlorophyll a</name>
        <dbReference type="ChEBI" id="CHEBI:58416"/>
        <label>1</label>
    </ligand>
</feature>
<feature type="binding site" description="axial binding residue" evidence="2">
    <location>
        <position position="221"/>
    </location>
    <ligand>
        <name>chlorophyll a</name>
        <dbReference type="ChEBI" id="CHEBI:58416"/>
        <label>5</label>
    </ligand>
    <ligandPart>
        <name>Mg</name>
        <dbReference type="ChEBI" id="CHEBI:25107"/>
    </ligandPart>
</feature>
<feature type="binding site" description="axial binding residue" evidence="2">
    <location>
        <position position="236"/>
    </location>
    <ligand>
        <name>chlorophyll a</name>
        <dbReference type="ChEBI" id="CHEBI:58416"/>
        <label>6</label>
    </ligand>
    <ligandPart>
        <name>Mg</name>
        <dbReference type="ChEBI" id="CHEBI:25107"/>
    </ligandPart>
</feature>
<feature type="sequence conflict" description="In Ref. 2; ABN49455." evidence="7" ref="2">
    <original>A</original>
    <variation>D</variation>
    <location>
        <position position="128"/>
    </location>
</feature>
<feature type="sequence conflict" description="In Ref. 2; ABN49455." evidence="7" ref="2">
    <original>S</original>
    <variation>F</variation>
    <location>
        <position position="149"/>
    </location>
</feature>
<feature type="strand" evidence="13">
    <location>
        <begin position="56"/>
        <end position="60"/>
    </location>
</feature>
<feature type="helix" evidence="14">
    <location>
        <begin position="85"/>
        <end position="117"/>
    </location>
</feature>
<feature type="turn" evidence="14">
    <location>
        <begin position="126"/>
        <end position="131"/>
    </location>
</feature>
<feature type="strand" evidence="12">
    <location>
        <begin position="134"/>
        <end position="136"/>
    </location>
</feature>
<feature type="helix" evidence="14">
    <location>
        <begin position="138"/>
        <end position="161"/>
    </location>
</feature>
<feature type="turn" evidence="14">
    <location>
        <begin position="163"/>
        <end position="166"/>
    </location>
</feature>
<feature type="strand" evidence="14">
    <location>
        <begin position="170"/>
        <end position="172"/>
    </location>
</feature>
<feature type="strand" evidence="10">
    <location>
        <begin position="174"/>
        <end position="177"/>
    </location>
</feature>
<feature type="helix" evidence="10">
    <location>
        <begin position="180"/>
        <end position="183"/>
    </location>
</feature>
<feature type="helix" evidence="14">
    <location>
        <begin position="187"/>
        <end position="189"/>
    </location>
</feature>
<feature type="strand" evidence="11">
    <location>
        <begin position="190"/>
        <end position="192"/>
    </location>
</feature>
<feature type="helix" evidence="14">
    <location>
        <begin position="198"/>
        <end position="225"/>
    </location>
</feature>
<feature type="helix" evidence="14">
    <location>
        <begin position="229"/>
        <end position="238"/>
    </location>
</feature>
<feature type="turn" evidence="14">
    <location>
        <begin position="240"/>
        <end position="242"/>
    </location>
</feature>
<feature type="strand" evidence="14">
    <location>
        <begin position="243"/>
        <end position="245"/>
    </location>
</feature>
<comment type="function">
    <text evidence="6 7">The light-harvesting complex (LHC) functions as a light receptor, it captures and delivers excitation energy to photosystems with which it is closely associated.</text>
</comment>
<comment type="function">
    <text evidence="6">May channel protons produced in the catalytic Mn center of water oxidation into the thylakoid lumen.</text>
</comment>
<comment type="cofactor">
    <text evidence="2">Binds at least 14 chlorophylls (8 Chl-a and 6 Chl-b) and carotenoids such as lutein and neoxanthin.</text>
</comment>
<comment type="subunit">
    <text evidence="7">The LHC complex consists of chlorophyll a-b binding proteins.</text>
</comment>
<comment type="subcellular location">
    <subcellularLocation>
        <location evidence="7">Plastid</location>
        <location evidence="7">Chloroplast thylakoid membrane</location>
        <topology evidence="7">Multi-pass membrane protein</topology>
    </subcellularLocation>
</comment>
<comment type="induction">
    <text evidence="5">Down-regulated by UV-B.</text>
</comment>
<comment type="domain">
    <text evidence="7">The N-terminus of the protein extends into the stroma where it is involved with adhesion of granal membranes and post-translational modifications; both are believed to mediate the distribution of excitation energy between photosystems I and II.</text>
</comment>
<comment type="PTM">
    <text evidence="2">Photoregulated by reversible phosphorylation of its threonine residues.</text>
</comment>
<comment type="similarity">
    <text evidence="4">Belongs to the light-harvesting chlorophyll a/b-binding (LHC) protein family.</text>
</comment>
<keyword id="KW-0002">3D-structure</keyword>
<keyword id="KW-0148">Chlorophyll</keyword>
<keyword id="KW-0150">Chloroplast</keyword>
<keyword id="KW-0157">Chromophore</keyword>
<keyword id="KW-0903">Direct protein sequencing</keyword>
<keyword id="KW-0460">Magnesium</keyword>
<keyword id="KW-0472">Membrane</keyword>
<keyword id="KW-0479">Metal-binding</keyword>
<keyword id="KW-0597">Phosphoprotein</keyword>
<keyword id="KW-0602">Photosynthesis</keyword>
<keyword id="KW-0603">Photosystem I</keyword>
<keyword id="KW-0604">Photosystem II</keyword>
<keyword id="KW-0934">Plastid</keyword>
<keyword id="KW-0793">Thylakoid</keyword>
<keyword id="KW-0809">Transit peptide</keyword>
<keyword id="KW-0812">Transmembrane</keyword>
<keyword id="KW-1133">Transmembrane helix</keyword>
<accession>Q9SQL2</accession>
<accession>A3F6K3</accession>
<accession>P35386</accession>
<reference evidence="7 8" key="1">
    <citation type="journal article" date="1999" name="Biochim. Biophys. Acta">
        <title>Molecular markers for UV-B stress in plants: alteration of the expression of four classes of genes in Pisum sativum and the formation of high molecular mass RNA adducts.</title>
        <authorList>
            <person name="Brosche M."/>
            <person name="Fant C."/>
            <person name="Bergkvist S.W."/>
            <person name="Strid H."/>
            <person name="Svensk A."/>
            <person name="Olsson O."/>
            <person name="Strid A."/>
        </authorList>
    </citation>
    <scope>NUCLEOTIDE SEQUENCE [MRNA]</scope>
    <scope>INDUCTION</scope>
    <source>
        <strain evidence="5">cv. Greenfeast</strain>
        <tissue evidence="8">Leaf</tissue>
    </source>
</reference>
<reference evidence="9" key="2">
    <citation type="submission" date="2007-01" db="EMBL/GenBank/DDBJ databases">
        <title>Interacting partner of calcineurin B-like interacting protein kinase (CIPK) (partial homolog of photosystem I light harvesting chlorophyll a/b binding protein) from Pisum sativum.</title>
        <authorList>
            <person name="Gupta S."/>
            <person name="Tuteja N."/>
        </authorList>
    </citation>
    <scope>NUCLEOTIDE SEQUENCE [MRNA] OF 109-252</scope>
</reference>
<reference evidence="7" key="3">
    <citation type="journal article" date="1990" name="Eur. J. Biochem.">
        <title>Dicyclohexylcarbodiimide-binding proteins related to the short circuit of the proton-pumping activity of photosystem II. Identified as light-harvesting chlorophyll-a/b-binding proteins.</title>
        <authorList>
            <person name="Jahns P."/>
            <person name="Junge W."/>
        </authorList>
    </citation>
    <scope>PROTEIN SEQUENCE OF 110-124</scope>
    <scope>FUNCTION</scope>
    <source>
        <tissue evidence="6">Seedling</tissue>
    </source>
</reference>
<protein>
    <recommendedName>
        <fullName>Chlorophyll a-b binding protein P4, chloroplastic</fullName>
    </recommendedName>
    <alternativeName>
        <fullName>LHCI type III CAB-P4</fullName>
    </alternativeName>
</protein>
<dbReference type="EMBL" id="AF002248">
    <property type="protein sequence ID" value="AAF13731.1"/>
    <property type="molecule type" value="mRNA"/>
</dbReference>
<dbReference type="EMBL" id="EF208907">
    <property type="protein sequence ID" value="ABN49455.1"/>
    <property type="molecule type" value="mRNA"/>
</dbReference>
<dbReference type="PIR" id="T51616">
    <property type="entry name" value="T51616"/>
</dbReference>
<dbReference type="PDB" id="2O01">
    <property type="method" value="X-ray"/>
    <property type="resolution" value="3.40 A"/>
    <property type="chains" value="4=85-249"/>
</dbReference>
<dbReference type="PDB" id="2WSC">
    <property type="method" value="X-ray"/>
    <property type="resolution" value="3.30 A"/>
    <property type="chains" value="4=1-252"/>
</dbReference>
<dbReference type="PDB" id="2WSE">
    <property type="method" value="X-ray"/>
    <property type="resolution" value="3.49 A"/>
    <property type="chains" value="4=1-252"/>
</dbReference>
<dbReference type="PDB" id="2WSF">
    <property type="method" value="X-ray"/>
    <property type="resolution" value="3.48 A"/>
    <property type="chains" value="4=1-252"/>
</dbReference>
<dbReference type="PDB" id="3LW5">
    <property type="method" value="X-ray"/>
    <property type="resolution" value="3.30 A"/>
    <property type="chains" value="4=81-247"/>
</dbReference>
<dbReference type="PDB" id="4RKU">
    <property type="method" value="X-ray"/>
    <property type="resolution" value="3.00 A"/>
    <property type="chains" value="4=53-248"/>
</dbReference>
<dbReference type="PDB" id="4XK8">
    <property type="method" value="X-ray"/>
    <property type="resolution" value="2.80 A"/>
    <property type="chains" value="4/9=54-249"/>
</dbReference>
<dbReference type="PDB" id="4Y28">
    <property type="method" value="X-ray"/>
    <property type="resolution" value="2.80 A"/>
    <property type="chains" value="4=1-252"/>
</dbReference>
<dbReference type="PDB" id="5L8R">
    <property type="method" value="X-ray"/>
    <property type="resolution" value="2.60 A"/>
    <property type="chains" value="4=52-249"/>
</dbReference>
<dbReference type="PDB" id="6YAC">
    <property type="method" value="EM"/>
    <property type="resolution" value="2.50 A"/>
    <property type="chains" value="4=52-249"/>
</dbReference>
<dbReference type="PDB" id="6YEZ">
    <property type="method" value="EM"/>
    <property type="resolution" value="2.70 A"/>
    <property type="chains" value="4=52-249"/>
</dbReference>
<dbReference type="PDB" id="6ZOO">
    <property type="method" value="EM"/>
    <property type="resolution" value="2.74 A"/>
    <property type="chains" value="4=52-249"/>
</dbReference>
<dbReference type="PDB" id="6ZXS">
    <property type="method" value="X-ray"/>
    <property type="resolution" value="3.00 A"/>
    <property type="chains" value="4=52-249"/>
</dbReference>
<dbReference type="PDB" id="7DKZ">
    <property type="method" value="X-ray"/>
    <property type="resolution" value="2.39 A"/>
    <property type="chains" value="4=52-249"/>
</dbReference>
<dbReference type="PDBsum" id="2O01"/>
<dbReference type="PDBsum" id="2WSC"/>
<dbReference type="PDBsum" id="2WSE"/>
<dbReference type="PDBsum" id="2WSF"/>
<dbReference type="PDBsum" id="3LW5"/>
<dbReference type="PDBsum" id="4RKU"/>
<dbReference type="PDBsum" id="4XK8"/>
<dbReference type="PDBsum" id="4Y28"/>
<dbReference type="PDBsum" id="5L8R"/>
<dbReference type="PDBsum" id="6YAC"/>
<dbReference type="PDBsum" id="6YEZ"/>
<dbReference type="PDBsum" id="6ZOO"/>
<dbReference type="PDBsum" id="6ZXS"/>
<dbReference type="PDBsum" id="7DKZ"/>
<dbReference type="EMDB" id="EMD-10746"/>
<dbReference type="EMDB" id="EMD-10798"/>
<dbReference type="EMDB" id="EMD-11326"/>
<dbReference type="SMR" id="Q9SQL2"/>
<dbReference type="DIP" id="DIP-60296N"/>
<dbReference type="IntAct" id="Q9SQL2">
    <property type="interactions" value="3"/>
</dbReference>
<dbReference type="EvolutionaryTrace" id="Q9SQL2"/>
<dbReference type="GO" id="GO:0009535">
    <property type="term" value="C:chloroplast thylakoid membrane"/>
    <property type="evidence" value="ECO:0007669"/>
    <property type="project" value="UniProtKB-SubCell"/>
</dbReference>
<dbReference type="GO" id="GO:0009522">
    <property type="term" value="C:photosystem I"/>
    <property type="evidence" value="ECO:0007669"/>
    <property type="project" value="UniProtKB-KW"/>
</dbReference>
<dbReference type="GO" id="GO:0009523">
    <property type="term" value="C:photosystem II"/>
    <property type="evidence" value="ECO:0007669"/>
    <property type="project" value="UniProtKB-KW"/>
</dbReference>
<dbReference type="GO" id="GO:0016168">
    <property type="term" value="F:chlorophyll binding"/>
    <property type="evidence" value="ECO:0007669"/>
    <property type="project" value="UniProtKB-KW"/>
</dbReference>
<dbReference type="GO" id="GO:0046872">
    <property type="term" value="F:metal ion binding"/>
    <property type="evidence" value="ECO:0007669"/>
    <property type="project" value="UniProtKB-KW"/>
</dbReference>
<dbReference type="GO" id="GO:0009765">
    <property type="term" value="P:photosynthesis, light harvesting"/>
    <property type="evidence" value="ECO:0007669"/>
    <property type="project" value="InterPro"/>
</dbReference>
<dbReference type="FunFam" id="1.10.3460.10:FF:000002">
    <property type="entry name" value="Chlorophyll a-b binding protein, chloroplastic"/>
    <property type="match status" value="1"/>
</dbReference>
<dbReference type="Gene3D" id="1.10.3460.10">
    <property type="entry name" value="Chlorophyll a/b binding protein domain"/>
    <property type="match status" value="1"/>
</dbReference>
<dbReference type="InterPro" id="IPR001344">
    <property type="entry name" value="Chloro_AB-bd_pln"/>
</dbReference>
<dbReference type="InterPro" id="IPR022796">
    <property type="entry name" value="Chloroa_b-bind"/>
</dbReference>
<dbReference type="PANTHER" id="PTHR21649">
    <property type="entry name" value="CHLOROPHYLL A/B BINDING PROTEIN"/>
    <property type="match status" value="1"/>
</dbReference>
<dbReference type="Pfam" id="PF00504">
    <property type="entry name" value="Chloroa_b-bind"/>
    <property type="match status" value="1"/>
</dbReference>
<dbReference type="SUPFAM" id="SSF103511">
    <property type="entry name" value="Chlorophyll a-b binding protein"/>
    <property type="match status" value="1"/>
</dbReference>
<sequence>MATVTTQASAAIFGPCGLKSRFLGGSSGKLNRGVAFRPVGCSPSASFKVEAKKGEWLPGLASPGYLTGSLPGDNGFDPLGLAEDPENLRWFVQAELVNGRWAMLGVAGMLLPEVFTSIGIINVPKWYAAGKEEYFASSSTLFVIEFILSHYVEIRRWQDIKNPGSVNQDPIFKQYSLPAGEVGYPGGIFNPLNFAPTLEAKEKEIANGRLAMLAFLGFIIQHNVTGKGPFDNLLQHISDPWHNTIVQTLGGN</sequence>
<organism>
    <name type="scientific">Pisum sativum</name>
    <name type="common">Garden pea</name>
    <name type="synonym">Lathyrus oleraceus</name>
    <dbReference type="NCBI Taxonomy" id="3888"/>
    <lineage>
        <taxon>Eukaryota</taxon>
        <taxon>Viridiplantae</taxon>
        <taxon>Streptophyta</taxon>
        <taxon>Embryophyta</taxon>
        <taxon>Tracheophyta</taxon>
        <taxon>Spermatophyta</taxon>
        <taxon>Magnoliopsida</taxon>
        <taxon>eudicotyledons</taxon>
        <taxon>Gunneridae</taxon>
        <taxon>Pentapetalae</taxon>
        <taxon>rosids</taxon>
        <taxon>fabids</taxon>
        <taxon>Fabales</taxon>
        <taxon>Fabaceae</taxon>
        <taxon>Papilionoideae</taxon>
        <taxon>50 kb inversion clade</taxon>
        <taxon>NPAAA clade</taxon>
        <taxon>Hologalegina</taxon>
        <taxon>IRL clade</taxon>
        <taxon>Fabeae</taxon>
        <taxon>Pisum</taxon>
    </lineage>
</organism>
<name>CB24_PEA</name>
<gene>
    <name evidence="8" type="primary">lhcA-P4</name>
</gene>
<proteinExistence type="evidence at protein level"/>
<evidence type="ECO:0000250" key="1"/>
<evidence type="ECO:0000250" key="2">
    <source>
        <dbReference type="UniProtKB" id="P07371"/>
    </source>
</evidence>
<evidence type="ECO:0000250" key="3">
    <source>
        <dbReference type="UniProtKB" id="P27521"/>
    </source>
</evidence>
<evidence type="ECO:0000255" key="4"/>
<evidence type="ECO:0000269" key="5">
    <source>
    </source>
</evidence>
<evidence type="ECO:0000269" key="6">
    <source>
    </source>
</evidence>
<evidence type="ECO:0000305" key="7"/>
<evidence type="ECO:0000312" key="8">
    <source>
        <dbReference type="EMBL" id="AAF13731.1"/>
    </source>
</evidence>
<evidence type="ECO:0000312" key="9">
    <source>
        <dbReference type="EMBL" id="ABN49455.1"/>
    </source>
</evidence>
<evidence type="ECO:0007829" key="10">
    <source>
        <dbReference type="PDB" id="2WSC"/>
    </source>
</evidence>
<evidence type="ECO:0007829" key="11">
    <source>
        <dbReference type="PDB" id="4RKU"/>
    </source>
</evidence>
<evidence type="ECO:0007829" key="12">
    <source>
        <dbReference type="PDB" id="4XK8"/>
    </source>
</evidence>
<evidence type="ECO:0007829" key="13">
    <source>
        <dbReference type="PDB" id="5L8R"/>
    </source>
</evidence>
<evidence type="ECO:0007829" key="14">
    <source>
        <dbReference type="PDB" id="7DKZ"/>
    </source>
</evidence>